<feature type="chain" id="PRO_5000267080" description="NADH-quinone oxidoreductase subunit A">
    <location>
        <begin position="1"/>
        <end position="128"/>
    </location>
</feature>
<feature type="transmembrane region" description="Helical" evidence="1">
    <location>
        <begin position="9"/>
        <end position="29"/>
    </location>
</feature>
<feature type="transmembrane region" description="Helical" evidence="1">
    <location>
        <begin position="68"/>
        <end position="88"/>
    </location>
</feature>
<feature type="transmembrane region" description="Helical" evidence="1">
    <location>
        <begin position="96"/>
        <end position="116"/>
    </location>
</feature>
<sequence>MLTPLQTYFPIAVALLVAVGLAAVMLALANVLGPRRPSEVKSTPFECGSLPVSPARERFSVKFYVVALLFIVFDIEAIFLYPWAVLLLPSDGYPGLGWAGYISMGIFVATLVAGLVYVWKKGVLDWAD</sequence>
<accession>A7H9V2</accession>
<protein>
    <recommendedName>
        <fullName evidence="1">NADH-quinone oxidoreductase subunit A</fullName>
        <ecNumber evidence="1">7.1.1.-</ecNumber>
    </recommendedName>
    <alternativeName>
        <fullName evidence="1">NADH dehydrogenase I subunit A</fullName>
    </alternativeName>
    <alternativeName>
        <fullName evidence="1">NDH-1 subunit A</fullName>
    </alternativeName>
    <alternativeName>
        <fullName evidence="1">NUO1</fullName>
    </alternativeName>
</protein>
<proteinExistence type="inferred from homology"/>
<comment type="function">
    <text evidence="1">NDH-1 shuttles electrons from NADH, via FMN and iron-sulfur (Fe-S) centers, to quinones in the respiratory chain. The immediate electron acceptor for the enzyme in this species is believed to be ubiquinone. Couples the redox reaction to proton translocation (for every two electrons transferred, four hydrogen ions are translocated across the cytoplasmic membrane), and thus conserves the redox energy in a proton gradient.</text>
</comment>
<comment type="catalytic activity">
    <reaction evidence="1">
        <text>a quinone + NADH + 5 H(+)(in) = a quinol + NAD(+) + 4 H(+)(out)</text>
        <dbReference type="Rhea" id="RHEA:57888"/>
        <dbReference type="ChEBI" id="CHEBI:15378"/>
        <dbReference type="ChEBI" id="CHEBI:24646"/>
        <dbReference type="ChEBI" id="CHEBI:57540"/>
        <dbReference type="ChEBI" id="CHEBI:57945"/>
        <dbReference type="ChEBI" id="CHEBI:132124"/>
    </reaction>
</comment>
<comment type="subunit">
    <text evidence="1">NDH-1 is composed of 14 different subunits. Subunits NuoA, H, J, K, L, M, N constitute the membrane sector of the complex.</text>
</comment>
<comment type="subcellular location">
    <subcellularLocation>
        <location evidence="1">Cell inner membrane</location>
        <topology evidence="1">Multi-pass membrane protein</topology>
    </subcellularLocation>
</comment>
<comment type="similarity">
    <text evidence="1">Belongs to the complex I subunit 3 family.</text>
</comment>
<name>NUOA_ANADF</name>
<organism>
    <name type="scientific">Anaeromyxobacter sp. (strain Fw109-5)</name>
    <dbReference type="NCBI Taxonomy" id="404589"/>
    <lineage>
        <taxon>Bacteria</taxon>
        <taxon>Pseudomonadati</taxon>
        <taxon>Myxococcota</taxon>
        <taxon>Myxococcia</taxon>
        <taxon>Myxococcales</taxon>
        <taxon>Cystobacterineae</taxon>
        <taxon>Anaeromyxobacteraceae</taxon>
        <taxon>Anaeromyxobacter</taxon>
    </lineage>
</organism>
<keyword id="KW-0997">Cell inner membrane</keyword>
<keyword id="KW-1003">Cell membrane</keyword>
<keyword id="KW-0472">Membrane</keyword>
<keyword id="KW-0520">NAD</keyword>
<keyword id="KW-0874">Quinone</keyword>
<keyword id="KW-1185">Reference proteome</keyword>
<keyword id="KW-1278">Translocase</keyword>
<keyword id="KW-0812">Transmembrane</keyword>
<keyword id="KW-1133">Transmembrane helix</keyword>
<keyword id="KW-0813">Transport</keyword>
<keyword id="KW-0830">Ubiquinone</keyword>
<evidence type="ECO:0000255" key="1">
    <source>
        <dbReference type="HAMAP-Rule" id="MF_01394"/>
    </source>
</evidence>
<reference key="1">
    <citation type="journal article" date="2015" name="Genome Announc.">
        <title>Complete genome sequence of Anaeromyxobacter sp. Fw109-5, an anaerobic, metal-reducing bacterium isolated from a contaminated subsurface environment.</title>
        <authorList>
            <person name="Hwang C."/>
            <person name="Copeland A."/>
            <person name="Lucas S."/>
            <person name="Lapidus A."/>
            <person name="Barry K."/>
            <person name="Glavina Del Rio T."/>
            <person name="Dalin E."/>
            <person name="Tice H."/>
            <person name="Pitluck S."/>
            <person name="Sims D."/>
            <person name="Brettin T."/>
            <person name="Bruce D.C."/>
            <person name="Detter J.C."/>
            <person name="Han C.S."/>
            <person name="Schmutz J."/>
            <person name="Larimer F.W."/>
            <person name="Land M.L."/>
            <person name="Hauser L.J."/>
            <person name="Kyrpides N."/>
            <person name="Lykidis A."/>
            <person name="Richardson P."/>
            <person name="Belieav A."/>
            <person name="Sanford R.A."/>
            <person name="Loeffler F.E."/>
            <person name="Fields M.W."/>
        </authorList>
    </citation>
    <scope>NUCLEOTIDE SEQUENCE [LARGE SCALE GENOMIC DNA]</scope>
    <source>
        <strain>Fw109-5</strain>
    </source>
</reference>
<dbReference type="EC" id="7.1.1.-" evidence="1"/>
<dbReference type="EMBL" id="CP000769">
    <property type="protein sequence ID" value="ABS25498.1"/>
    <property type="molecule type" value="Genomic_DNA"/>
</dbReference>
<dbReference type="RefSeq" id="WP_011985604.1">
    <property type="nucleotide sequence ID" value="NC_009675.1"/>
</dbReference>
<dbReference type="SMR" id="A7H9V2"/>
<dbReference type="STRING" id="404589.Anae109_1290"/>
<dbReference type="KEGG" id="afw:Anae109_1290"/>
<dbReference type="eggNOG" id="COG0838">
    <property type="taxonomic scope" value="Bacteria"/>
</dbReference>
<dbReference type="HOGENOM" id="CLU_119549_2_1_7"/>
<dbReference type="OrthoDB" id="9791970at2"/>
<dbReference type="Proteomes" id="UP000006382">
    <property type="component" value="Chromosome"/>
</dbReference>
<dbReference type="GO" id="GO:0030964">
    <property type="term" value="C:NADH dehydrogenase complex"/>
    <property type="evidence" value="ECO:0007669"/>
    <property type="project" value="TreeGrafter"/>
</dbReference>
<dbReference type="GO" id="GO:0005886">
    <property type="term" value="C:plasma membrane"/>
    <property type="evidence" value="ECO:0007669"/>
    <property type="project" value="UniProtKB-SubCell"/>
</dbReference>
<dbReference type="GO" id="GO:0008137">
    <property type="term" value="F:NADH dehydrogenase (ubiquinone) activity"/>
    <property type="evidence" value="ECO:0007669"/>
    <property type="project" value="InterPro"/>
</dbReference>
<dbReference type="GO" id="GO:0050136">
    <property type="term" value="F:NADH:ubiquinone reductase (non-electrogenic) activity"/>
    <property type="evidence" value="ECO:0007669"/>
    <property type="project" value="UniProtKB-UniRule"/>
</dbReference>
<dbReference type="GO" id="GO:0048038">
    <property type="term" value="F:quinone binding"/>
    <property type="evidence" value="ECO:0007669"/>
    <property type="project" value="UniProtKB-KW"/>
</dbReference>
<dbReference type="Gene3D" id="1.20.58.1610">
    <property type="entry name" value="NADH:ubiquinone/plastoquinone oxidoreductase, chain 3"/>
    <property type="match status" value="1"/>
</dbReference>
<dbReference type="HAMAP" id="MF_01394">
    <property type="entry name" value="NDH1_NuoA"/>
    <property type="match status" value="1"/>
</dbReference>
<dbReference type="InterPro" id="IPR023043">
    <property type="entry name" value="NAD(P)H_OxRDtase_bac/plastid"/>
</dbReference>
<dbReference type="InterPro" id="IPR000440">
    <property type="entry name" value="NADH_UbQ/plastoQ_OxRdtase_su3"/>
</dbReference>
<dbReference type="InterPro" id="IPR038430">
    <property type="entry name" value="NDAH_ubi_oxred_su3_sf"/>
</dbReference>
<dbReference type="PANTHER" id="PTHR11058:SF22">
    <property type="entry name" value="NADH-QUINONE OXIDOREDUCTASE SUBUNIT A"/>
    <property type="match status" value="1"/>
</dbReference>
<dbReference type="PANTHER" id="PTHR11058">
    <property type="entry name" value="NADH-UBIQUINONE OXIDOREDUCTASE CHAIN 3"/>
    <property type="match status" value="1"/>
</dbReference>
<dbReference type="Pfam" id="PF00507">
    <property type="entry name" value="Oxidored_q4"/>
    <property type="match status" value="1"/>
</dbReference>
<gene>
    <name evidence="1" type="primary">nuoA</name>
    <name type="ordered locus">Anae109_1290</name>
</gene>